<feature type="signal peptide" evidence="1">
    <location>
        <begin position="1"/>
        <end position="22"/>
    </location>
</feature>
<feature type="chain" id="PRO_0000282148" description="Uncharacterized lipoprotein SA0402">
    <location>
        <begin position="23"/>
        <end position="263"/>
    </location>
</feature>
<feature type="lipid moiety-binding region" description="N-palmitoyl cysteine" evidence="1">
    <location>
        <position position="23"/>
    </location>
</feature>
<feature type="lipid moiety-binding region" description="S-diacylglycerol cysteine" evidence="1">
    <location>
        <position position="23"/>
    </location>
</feature>
<reference key="1">
    <citation type="journal article" date="2001" name="Lancet">
        <title>Whole genome sequencing of meticillin-resistant Staphylococcus aureus.</title>
        <authorList>
            <person name="Kuroda M."/>
            <person name="Ohta T."/>
            <person name="Uchiyama I."/>
            <person name="Baba T."/>
            <person name="Yuzawa H."/>
            <person name="Kobayashi I."/>
            <person name="Cui L."/>
            <person name="Oguchi A."/>
            <person name="Aoki K."/>
            <person name="Nagai Y."/>
            <person name="Lian J.-Q."/>
            <person name="Ito T."/>
            <person name="Kanamori M."/>
            <person name="Matsumaru H."/>
            <person name="Maruyama A."/>
            <person name="Murakami H."/>
            <person name="Hosoyama A."/>
            <person name="Mizutani-Ui Y."/>
            <person name="Takahashi N.K."/>
            <person name="Sawano T."/>
            <person name="Inoue R."/>
            <person name="Kaito C."/>
            <person name="Sekimizu K."/>
            <person name="Hirakawa H."/>
            <person name="Kuhara S."/>
            <person name="Goto S."/>
            <person name="Yabuzaki J."/>
            <person name="Kanehisa M."/>
            <person name="Yamashita A."/>
            <person name="Oshima K."/>
            <person name="Furuya K."/>
            <person name="Yoshino C."/>
            <person name="Shiba T."/>
            <person name="Hattori M."/>
            <person name="Ogasawara N."/>
            <person name="Hayashi H."/>
            <person name="Hiramatsu K."/>
        </authorList>
    </citation>
    <scope>NUCLEOTIDE SEQUENCE [LARGE SCALE GENOMIC DNA]</scope>
    <source>
        <strain>N315</strain>
    </source>
</reference>
<comment type="subcellular location">
    <subcellularLocation>
        <location evidence="1">Cell membrane</location>
        <topology evidence="1">Lipid-anchor</topology>
    </subcellularLocation>
</comment>
<comment type="similarity">
    <text evidence="2">Belongs to the staphylococcal tandem lipoprotein family.</text>
</comment>
<comment type="sequence caution" evidence="2">
    <conflict type="erroneous initiation">
        <sequence resource="EMBL-CDS" id="BAB41631"/>
    </conflict>
</comment>
<sequence length="263" mass="30629">MGYLKRLVLYIVIMVMSVFIIGCDKSSDTAENPKEGSKEAQIKKSFSKTLDMYPIKNLENLYDKEGYRDGEFKKGDKGTWTISTDFAKSNKQGEMNSEGMVLHFNRNTRTATGYYTVRTTYDEVDKLAREKKYRVEFKNNKIVLLDKVEDENLKQKIENFKFFGQYADFKDLKNYKNGRISSNENVPYYEAEYKRNNSDGNVKKLREKYPITTKQSPILKLHIDGDIKGSSVGYKQIEYTFSKEKDDETFMSDFLNFGPSHSK</sequence>
<evidence type="ECO:0000255" key="1">
    <source>
        <dbReference type="PROSITE-ProRule" id="PRU00303"/>
    </source>
</evidence>
<evidence type="ECO:0000305" key="2"/>
<keyword id="KW-1003">Cell membrane</keyword>
<keyword id="KW-0449">Lipoprotein</keyword>
<keyword id="KW-0472">Membrane</keyword>
<keyword id="KW-0564">Palmitate</keyword>
<keyword id="KW-0732">Signal</keyword>
<gene>
    <name type="primary">lpl6</name>
    <name type="ordered locus">SA0402</name>
</gene>
<dbReference type="EMBL" id="BA000018">
    <property type="protein sequence ID" value="BAB41631.1"/>
    <property type="status" value="ALT_INIT"/>
    <property type="molecule type" value="Genomic_DNA"/>
</dbReference>
<dbReference type="PIR" id="D89809">
    <property type="entry name" value="D89809"/>
</dbReference>
<dbReference type="RefSeq" id="WP_001802015.1">
    <property type="nucleotide sequence ID" value="NC_002745.2"/>
</dbReference>
<dbReference type="SMR" id="Q7A7G1"/>
<dbReference type="EnsemblBacteria" id="BAB41631">
    <property type="protein sequence ID" value="BAB41631"/>
    <property type="gene ID" value="BAB41631"/>
</dbReference>
<dbReference type="KEGG" id="sau:SA0402"/>
<dbReference type="HOGENOM" id="CLU_071589_0_1_9"/>
<dbReference type="GO" id="GO:0005886">
    <property type="term" value="C:plasma membrane"/>
    <property type="evidence" value="ECO:0007669"/>
    <property type="project" value="UniProtKB-SubCell"/>
</dbReference>
<dbReference type="Gene3D" id="2.50.20.40">
    <property type="match status" value="1"/>
</dbReference>
<dbReference type="InterPro" id="IPR007595">
    <property type="entry name" value="Csa"/>
</dbReference>
<dbReference type="InterPro" id="IPR038641">
    <property type="entry name" value="Csa_sf"/>
</dbReference>
<dbReference type="NCBIfam" id="TIGR01742">
    <property type="entry name" value="SA_tandem_lipo"/>
    <property type="match status" value="1"/>
</dbReference>
<dbReference type="Pfam" id="PF04507">
    <property type="entry name" value="DUF576"/>
    <property type="match status" value="1"/>
</dbReference>
<dbReference type="PROSITE" id="PS51257">
    <property type="entry name" value="PROKAR_LIPOPROTEIN"/>
    <property type="match status" value="1"/>
</dbReference>
<proteinExistence type="inferred from homology"/>
<protein>
    <recommendedName>
        <fullName>Uncharacterized lipoprotein SA0402</fullName>
    </recommendedName>
</protein>
<name>Y402_STAAN</name>
<accession>Q7A7G1</accession>
<organism>
    <name type="scientific">Staphylococcus aureus (strain N315)</name>
    <dbReference type="NCBI Taxonomy" id="158879"/>
    <lineage>
        <taxon>Bacteria</taxon>
        <taxon>Bacillati</taxon>
        <taxon>Bacillota</taxon>
        <taxon>Bacilli</taxon>
        <taxon>Bacillales</taxon>
        <taxon>Staphylococcaceae</taxon>
        <taxon>Staphylococcus</taxon>
    </lineage>
</organism>